<keyword id="KW-0614">Plasmid</keyword>
<reference key="1">
    <citation type="submission" date="2000-04" db="EMBL/GenBank/DDBJ databases">
        <title>Complete nucleotide sequence of the F plasmid: its implications for organization and diversification of plasmid genomes.</title>
        <authorList>
            <person name="Shimizu H."/>
            <person name="Saitoh Y."/>
            <person name="Suda Y."/>
            <person name="Uehara K."/>
            <person name="Sampei G."/>
            <person name="Mizobuchi K."/>
        </authorList>
    </citation>
    <scope>NUCLEOTIDE SEQUENCE [LARGE SCALE GENOMIC DNA]</scope>
    <source>
        <strain>K12 / CR63</strain>
    </source>
</reference>
<protein>
    <recommendedName>
        <fullName>Uncharacterized protein YuaK</fullName>
    </recommendedName>
</protein>
<gene>
    <name type="primary">yuaK</name>
    <name type="synonym">ybiB</name>
    <name type="ordered locus">ECOK12F022</name>
</gene>
<name>YUAK_ECOLI</name>
<proteinExistence type="predicted"/>
<organism>
    <name type="scientific">Escherichia coli (strain K12)</name>
    <dbReference type="NCBI Taxonomy" id="83333"/>
    <lineage>
        <taxon>Bacteria</taxon>
        <taxon>Pseudomonadati</taxon>
        <taxon>Pseudomonadota</taxon>
        <taxon>Gammaproteobacteria</taxon>
        <taxon>Enterobacterales</taxon>
        <taxon>Enterobacteriaceae</taxon>
        <taxon>Escherichia</taxon>
    </lineage>
</organism>
<sequence length="94" mass="10260">MVRRLRFSGPKTSIICSPMTSLKTSIKTITYLSDIGCLEIQGASLAGSGSGGEHAAVLYSLIGTCRLNNVELEKWLCYGIEHIQDWSANLVRDL</sequence>
<geneLocation type="plasmid">
    <name>F</name>
</geneLocation>
<accession>Q9JMS9</accession>
<feature type="chain" id="PRO_0000267221" description="Uncharacterized protein YuaK">
    <location>
        <begin position="1"/>
        <end position="94"/>
    </location>
</feature>
<dbReference type="EMBL" id="AP001918">
    <property type="protein sequence ID" value="BAA97892.1"/>
    <property type="molecule type" value="Genomic_DNA"/>
</dbReference>
<dbReference type="RefSeq" id="NP_061401.1">
    <property type="nucleotide sequence ID" value="NC_002483.1"/>
</dbReference>
<dbReference type="SMR" id="Q9JMS9"/>